<feature type="chain" id="PRO_0000312696" description="Keratin, type I cytoskeletal 26">
    <location>
        <begin position="1"/>
        <end position="469"/>
    </location>
</feature>
<feature type="domain" description="IF rod" evidence="3">
    <location>
        <begin position="83"/>
        <end position="398"/>
    </location>
</feature>
<feature type="region of interest" description="Head" evidence="2">
    <location>
        <begin position="1"/>
        <end position="82"/>
    </location>
</feature>
<feature type="region of interest" description="Coil 1A" evidence="2">
    <location>
        <begin position="83"/>
        <end position="118"/>
    </location>
</feature>
<feature type="region of interest" description="Linker 1" evidence="2">
    <location>
        <begin position="119"/>
        <end position="140"/>
    </location>
</feature>
<feature type="region of interest" description="Coil 1B" evidence="2">
    <location>
        <begin position="141"/>
        <end position="232"/>
    </location>
</feature>
<feature type="region of interest" description="Linker 12" evidence="2">
    <location>
        <begin position="233"/>
        <end position="255"/>
    </location>
</feature>
<feature type="region of interest" description="Coil 2" evidence="2">
    <location>
        <begin position="256"/>
        <end position="394"/>
    </location>
</feature>
<feature type="region of interest" description="Tail" evidence="2">
    <location>
        <begin position="395"/>
        <end position="465"/>
    </location>
</feature>
<feature type="region of interest" description="Disordered" evidence="4">
    <location>
        <begin position="398"/>
        <end position="421"/>
    </location>
</feature>
<feature type="region of interest" description="Disordered" evidence="4">
    <location>
        <begin position="450"/>
        <end position="469"/>
    </location>
</feature>
<feature type="compositionally biased region" description="Basic and acidic residues" evidence="4">
    <location>
        <begin position="405"/>
        <end position="421"/>
    </location>
</feature>
<comment type="subunit">
    <text evidence="5">Heterotetramer of two type I and two type II keratins.</text>
</comment>
<comment type="miscellaneous">
    <text evidence="5">There are two types of cytoskeletal and microfibrillar keratin: I (acidic; 40-55 kDa) and II (neutral to basic; 56-70 kDa).</text>
</comment>
<comment type="similarity">
    <text evidence="3">Belongs to the intermediate filament family.</text>
</comment>
<keyword id="KW-0175">Coiled coil</keyword>
<keyword id="KW-0403">Intermediate filament</keyword>
<keyword id="KW-0416">Keratin</keyword>
<keyword id="KW-1185">Reference proteome</keyword>
<reference evidence="6" key="1">
    <citation type="submission" date="2007-06" db="EMBL/GenBank/DDBJ databases">
        <authorList>
            <consortium name="NIH - Mammalian Gene Collection (MGC) project"/>
        </authorList>
    </citation>
    <scope>NUCLEOTIDE SEQUENCE [LARGE SCALE MRNA]</scope>
    <source>
        <strain evidence="6">Hereford</strain>
        <tissue evidence="6">Fetal skin</tissue>
    </source>
</reference>
<proteinExistence type="evidence at transcript level"/>
<evidence type="ECO:0000250" key="1">
    <source>
        <dbReference type="UniProtKB" id="Q7Z3Y9"/>
    </source>
</evidence>
<evidence type="ECO:0000255" key="2"/>
<evidence type="ECO:0000255" key="3">
    <source>
        <dbReference type="PROSITE-ProRule" id="PRU01188"/>
    </source>
</evidence>
<evidence type="ECO:0000256" key="4">
    <source>
        <dbReference type="SAM" id="MobiDB-lite"/>
    </source>
</evidence>
<evidence type="ECO:0000305" key="5"/>
<evidence type="ECO:0000312" key="6">
    <source>
        <dbReference type="EMBL" id="AAI46075.1"/>
    </source>
</evidence>
<gene>
    <name evidence="1" type="primary">KRT26</name>
</gene>
<sequence>MSFRLSSGSRRLCSPAGSGQLTGGRTGFRAGNACGGLGAGSSFSGPLGSVSSRGSFSHGGGGLGSGVCTGFLENEHGLLPGNEKVTLQNLNDRLASYLDHVCTLEEANADLEQKIKGWYEKYGPGSGRQLAYDCSKYFSVTEDLKRQIISVTTCNASIALQNENARLTADDFRLKYENELALNQSVEADINGLHRVMEELTLCTSDLEIQCEALSEELTCLKKNHQEEMKVMQGAAGGNVNVEINAAPGVDLTVLLNNMRAEYEDLAEQNREDAEAWFNEKSTSLHQQISDDAGAATAARNELMELKRNLQTLEIELQSLMAMKHSYECSLAETESNYCHQLQQIQEQIGATEDQLQQIRMETEGQKLEHERLLDVKIFLEKEIEMYCKLIDGEGRKSKSTYCKSEGRGPKNSENQVKDSKEEAVVKTVVGELDQLGSVLSLRVHSVEEKSSKISNITMEQRLPSKVPQ</sequence>
<protein>
    <recommendedName>
        <fullName>Keratin, type I cytoskeletal 26</fullName>
    </recommendedName>
    <alternativeName>
        <fullName>Cytokeratin-26</fullName>
        <shortName>CK-26</shortName>
    </alternativeName>
    <alternativeName>
        <fullName>Keratin-26</fullName>
        <shortName>K26</shortName>
    </alternativeName>
    <alternativeName>
        <fullName>Type I inner root sheath-specific keratin-K25irs2</fullName>
    </alternativeName>
</protein>
<name>K1C26_BOVIN</name>
<dbReference type="EMBL" id="BC146074">
    <property type="protein sequence ID" value="AAI46075.1"/>
    <property type="molecule type" value="mRNA"/>
</dbReference>
<dbReference type="RefSeq" id="NP_001092566.1">
    <property type="nucleotide sequence ID" value="NM_001099096.1"/>
</dbReference>
<dbReference type="SMR" id="A6H712"/>
<dbReference type="FunCoup" id="A6H712">
    <property type="interactions" value="108"/>
</dbReference>
<dbReference type="STRING" id="9913.ENSBTAP00000040717"/>
<dbReference type="PaxDb" id="9913-ENSBTAP00000040717"/>
<dbReference type="PeptideAtlas" id="A6H712"/>
<dbReference type="GeneID" id="539216"/>
<dbReference type="KEGG" id="bta:539216"/>
<dbReference type="CTD" id="353288"/>
<dbReference type="VEuPathDB" id="HostDB:ENSBTAG00000030546"/>
<dbReference type="eggNOG" id="ENOG502SMDE">
    <property type="taxonomic scope" value="Eukaryota"/>
</dbReference>
<dbReference type="HOGENOM" id="CLU_012560_8_3_1"/>
<dbReference type="InParanoid" id="A6H712"/>
<dbReference type="OMA" id="IQCETLS"/>
<dbReference type="OrthoDB" id="9447587at2759"/>
<dbReference type="TreeFam" id="TF332742"/>
<dbReference type="Reactome" id="R-BTA-6805567">
    <property type="pathway name" value="Keratinization"/>
</dbReference>
<dbReference type="Reactome" id="R-BTA-6809371">
    <property type="pathway name" value="Formation of the cornified envelope"/>
</dbReference>
<dbReference type="Proteomes" id="UP000009136">
    <property type="component" value="Chromosome 19"/>
</dbReference>
<dbReference type="Bgee" id="ENSBTAG00000030546">
    <property type="expression patterns" value="Expressed in zone of skin and 6 other cell types or tissues"/>
</dbReference>
<dbReference type="GO" id="GO:0005856">
    <property type="term" value="C:cytoskeleton"/>
    <property type="evidence" value="ECO:0000318"/>
    <property type="project" value="GO_Central"/>
</dbReference>
<dbReference type="GO" id="GO:0005882">
    <property type="term" value="C:intermediate filament"/>
    <property type="evidence" value="ECO:0007669"/>
    <property type="project" value="UniProtKB-KW"/>
</dbReference>
<dbReference type="GO" id="GO:0005198">
    <property type="term" value="F:structural molecule activity"/>
    <property type="evidence" value="ECO:0007669"/>
    <property type="project" value="InterPro"/>
</dbReference>
<dbReference type="GO" id="GO:0030855">
    <property type="term" value="P:epithelial cell differentiation"/>
    <property type="evidence" value="ECO:0000318"/>
    <property type="project" value="GO_Central"/>
</dbReference>
<dbReference type="GO" id="GO:0045109">
    <property type="term" value="P:intermediate filament organization"/>
    <property type="evidence" value="ECO:0000318"/>
    <property type="project" value="GO_Central"/>
</dbReference>
<dbReference type="FunFam" id="1.20.5.1160:FF:000002">
    <property type="entry name" value="Type I keratin 10"/>
    <property type="match status" value="1"/>
</dbReference>
<dbReference type="FunFam" id="1.20.5.170:FF:000002">
    <property type="entry name" value="Type I keratin KA11"/>
    <property type="match status" value="1"/>
</dbReference>
<dbReference type="FunFam" id="1.20.5.500:FF:000001">
    <property type="entry name" value="Type II keratin 23"/>
    <property type="match status" value="1"/>
</dbReference>
<dbReference type="Gene3D" id="1.20.5.170">
    <property type="match status" value="1"/>
</dbReference>
<dbReference type="Gene3D" id="1.20.5.500">
    <property type="entry name" value="Single helix bin"/>
    <property type="match status" value="1"/>
</dbReference>
<dbReference type="Gene3D" id="1.20.5.1160">
    <property type="entry name" value="Vasodilator-stimulated phosphoprotein"/>
    <property type="match status" value="1"/>
</dbReference>
<dbReference type="InterPro" id="IPR039008">
    <property type="entry name" value="IF_rod_dom"/>
</dbReference>
<dbReference type="InterPro" id="IPR002957">
    <property type="entry name" value="Keratin_I"/>
</dbReference>
<dbReference type="PANTHER" id="PTHR23239">
    <property type="entry name" value="INTERMEDIATE FILAMENT"/>
    <property type="match status" value="1"/>
</dbReference>
<dbReference type="PANTHER" id="PTHR23239:SF162">
    <property type="entry name" value="KERATIN, TYPE I CYTOSKELETAL 26"/>
    <property type="match status" value="1"/>
</dbReference>
<dbReference type="Pfam" id="PF00038">
    <property type="entry name" value="Filament"/>
    <property type="match status" value="1"/>
</dbReference>
<dbReference type="PRINTS" id="PR01248">
    <property type="entry name" value="TYPE1KERATIN"/>
</dbReference>
<dbReference type="SMART" id="SM01391">
    <property type="entry name" value="Filament"/>
    <property type="match status" value="1"/>
</dbReference>
<dbReference type="SUPFAM" id="SSF64593">
    <property type="entry name" value="Intermediate filament protein, coiled coil region"/>
    <property type="match status" value="2"/>
</dbReference>
<dbReference type="PROSITE" id="PS51842">
    <property type="entry name" value="IF_ROD_2"/>
    <property type="match status" value="1"/>
</dbReference>
<accession>A6H712</accession>
<organism>
    <name type="scientific">Bos taurus</name>
    <name type="common">Bovine</name>
    <dbReference type="NCBI Taxonomy" id="9913"/>
    <lineage>
        <taxon>Eukaryota</taxon>
        <taxon>Metazoa</taxon>
        <taxon>Chordata</taxon>
        <taxon>Craniata</taxon>
        <taxon>Vertebrata</taxon>
        <taxon>Euteleostomi</taxon>
        <taxon>Mammalia</taxon>
        <taxon>Eutheria</taxon>
        <taxon>Laurasiatheria</taxon>
        <taxon>Artiodactyla</taxon>
        <taxon>Ruminantia</taxon>
        <taxon>Pecora</taxon>
        <taxon>Bovidae</taxon>
        <taxon>Bovinae</taxon>
        <taxon>Bos</taxon>
    </lineage>
</organism>